<dbReference type="EC" id="1.17.1.8" evidence="1"/>
<dbReference type="EMBL" id="CP000409">
    <property type="protein sequence ID" value="ABV73099.1"/>
    <property type="molecule type" value="Genomic_DNA"/>
</dbReference>
<dbReference type="RefSeq" id="WP_012148300.1">
    <property type="nucleotide sequence ID" value="NC_009879.1"/>
</dbReference>
<dbReference type="SMR" id="A8EXL6"/>
<dbReference type="STRING" id="293613.A1E_00755"/>
<dbReference type="KEGG" id="rcm:A1E_00755"/>
<dbReference type="eggNOG" id="COG0289">
    <property type="taxonomic scope" value="Bacteria"/>
</dbReference>
<dbReference type="HOGENOM" id="CLU_047479_2_1_5"/>
<dbReference type="UniPathway" id="UPA00034">
    <property type="reaction ID" value="UER00018"/>
</dbReference>
<dbReference type="Proteomes" id="UP000007056">
    <property type="component" value="Chromosome"/>
</dbReference>
<dbReference type="GO" id="GO:0005829">
    <property type="term" value="C:cytosol"/>
    <property type="evidence" value="ECO:0007669"/>
    <property type="project" value="TreeGrafter"/>
</dbReference>
<dbReference type="GO" id="GO:0008839">
    <property type="term" value="F:4-hydroxy-tetrahydrodipicolinate reductase"/>
    <property type="evidence" value="ECO:0007669"/>
    <property type="project" value="UniProtKB-EC"/>
</dbReference>
<dbReference type="GO" id="GO:0051287">
    <property type="term" value="F:NAD binding"/>
    <property type="evidence" value="ECO:0007669"/>
    <property type="project" value="UniProtKB-UniRule"/>
</dbReference>
<dbReference type="GO" id="GO:0050661">
    <property type="term" value="F:NADP binding"/>
    <property type="evidence" value="ECO:0007669"/>
    <property type="project" value="UniProtKB-UniRule"/>
</dbReference>
<dbReference type="GO" id="GO:0016726">
    <property type="term" value="F:oxidoreductase activity, acting on CH or CH2 groups, NAD or NADP as acceptor"/>
    <property type="evidence" value="ECO:0007669"/>
    <property type="project" value="UniProtKB-UniRule"/>
</dbReference>
<dbReference type="GO" id="GO:0019877">
    <property type="term" value="P:diaminopimelate biosynthetic process"/>
    <property type="evidence" value="ECO:0007669"/>
    <property type="project" value="UniProtKB-UniRule"/>
</dbReference>
<dbReference type="GO" id="GO:0009089">
    <property type="term" value="P:lysine biosynthetic process via diaminopimelate"/>
    <property type="evidence" value="ECO:0007669"/>
    <property type="project" value="UniProtKB-UniRule"/>
</dbReference>
<dbReference type="CDD" id="cd02274">
    <property type="entry name" value="DHDPR_N"/>
    <property type="match status" value="1"/>
</dbReference>
<dbReference type="Gene3D" id="3.30.360.10">
    <property type="entry name" value="Dihydrodipicolinate Reductase, domain 2"/>
    <property type="match status" value="1"/>
</dbReference>
<dbReference type="Gene3D" id="3.40.50.720">
    <property type="entry name" value="NAD(P)-binding Rossmann-like Domain"/>
    <property type="match status" value="1"/>
</dbReference>
<dbReference type="HAMAP" id="MF_00102">
    <property type="entry name" value="DapB"/>
    <property type="match status" value="1"/>
</dbReference>
<dbReference type="InterPro" id="IPR022663">
    <property type="entry name" value="DapB_C"/>
</dbReference>
<dbReference type="InterPro" id="IPR000846">
    <property type="entry name" value="DapB_N"/>
</dbReference>
<dbReference type="InterPro" id="IPR022664">
    <property type="entry name" value="DapB_N_CS"/>
</dbReference>
<dbReference type="InterPro" id="IPR023940">
    <property type="entry name" value="DHDPR_bac"/>
</dbReference>
<dbReference type="InterPro" id="IPR036291">
    <property type="entry name" value="NAD(P)-bd_dom_sf"/>
</dbReference>
<dbReference type="NCBIfam" id="TIGR00036">
    <property type="entry name" value="dapB"/>
    <property type="match status" value="1"/>
</dbReference>
<dbReference type="PANTHER" id="PTHR20836:SF0">
    <property type="entry name" value="4-HYDROXY-TETRAHYDRODIPICOLINATE REDUCTASE 1, CHLOROPLASTIC-RELATED"/>
    <property type="match status" value="1"/>
</dbReference>
<dbReference type="PANTHER" id="PTHR20836">
    <property type="entry name" value="DIHYDRODIPICOLINATE REDUCTASE"/>
    <property type="match status" value="1"/>
</dbReference>
<dbReference type="Pfam" id="PF05173">
    <property type="entry name" value="DapB_C"/>
    <property type="match status" value="1"/>
</dbReference>
<dbReference type="Pfam" id="PF01113">
    <property type="entry name" value="DapB_N"/>
    <property type="match status" value="1"/>
</dbReference>
<dbReference type="PIRSF" id="PIRSF000161">
    <property type="entry name" value="DHPR"/>
    <property type="match status" value="1"/>
</dbReference>
<dbReference type="SUPFAM" id="SSF55347">
    <property type="entry name" value="Glyceraldehyde-3-phosphate dehydrogenase-like, C-terminal domain"/>
    <property type="match status" value="1"/>
</dbReference>
<dbReference type="SUPFAM" id="SSF51735">
    <property type="entry name" value="NAD(P)-binding Rossmann-fold domains"/>
    <property type="match status" value="1"/>
</dbReference>
<dbReference type="PROSITE" id="PS01298">
    <property type="entry name" value="DAPB"/>
    <property type="match status" value="1"/>
</dbReference>
<evidence type="ECO:0000255" key="1">
    <source>
        <dbReference type="HAMAP-Rule" id="MF_00102"/>
    </source>
</evidence>
<evidence type="ECO:0000305" key="2"/>
<proteinExistence type="inferred from homology"/>
<name>DAPB_RICCK</name>
<feature type="chain" id="PRO_1000008626" description="4-hydroxy-tetrahydrodipicolinate reductase">
    <location>
        <begin position="1"/>
        <end position="240"/>
    </location>
</feature>
<feature type="active site" description="Proton donor/acceptor" evidence="1">
    <location>
        <position position="134"/>
    </location>
</feature>
<feature type="active site" description="Proton donor" evidence="1">
    <location>
        <position position="138"/>
    </location>
</feature>
<feature type="binding site" evidence="1">
    <location>
        <begin position="8"/>
        <end position="13"/>
    </location>
    <ligand>
        <name>NAD(+)</name>
        <dbReference type="ChEBI" id="CHEBI:57540"/>
    </ligand>
</feature>
<feature type="binding site" evidence="1">
    <location>
        <begin position="78"/>
        <end position="80"/>
    </location>
    <ligand>
        <name>NAD(+)</name>
        <dbReference type="ChEBI" id="CHEBI:57540"/>
    </ligand>
</feature>
<feature type="binding site" evidence="1">
    <location>
        <begin position="102"/>
        <end position="105"/>
    </location>
    <ligand>
        <name>NAD(+)</name>
        <dbReference type="ChEBI" id="CHEBI:57540"/>
    </ligand>
</feature>
<feature type="binding site" evidence="1">
    <location>
        <position position="135"/>
    </location>
    <ligand>
        <name>(S)-2,3,4,5-tetrahydrodipicolinate</name>
        <dbReference type="ChEBI" id="CHEBI:16845"/>
    </ligand>
</feature>
<feature type="binding site" evidence="1">
    <location>
        <begin position="144"/>
        <end position="145"/>
    </location>
    <ligand>
        <name>(S)-2,3,4,5-tetrahydrodipicolinate</name>
        <dbReference type="ChEBI" id="CHEBI:16845"/>
    </ligand>
</feature>
<reference key="1">
    <citation type="submission" date="2007-09" db="EMBL/GenBank/DDBJ databases">
        <title>Complete genome sequence of Rickettsia canadensis.</title>
        <authorList>
            <person name="Madan A."/>
            <person name="Fahey J."/>
            <person name="Helton E."/>
            <person name="Ketteman M."/>
            <person name="Madan A."/>
            <person name="Rodrigues S."/>
            <person name="Sanchez A."/>
            <person name="Whiting M."/>
            <person name="Dasch G."/>
            <person name="Eremeeva M."/>
        </authorList>
    </citation>
    <scope>NUCLEOTIDE SEQUENCE [LARGE SCALE GENOMIC DNA]</scope>
    <source>
        <strain>McKiel</strain>
    </source>
</reference>
<sequence length="240" mass="26745">MINIGLSGSTGKMGRAIAERIDEFENCKISAKFSSTNSLYDLDNFCKHSDVFIDFSTPEILETLVNYALKHNTKLVIGTTGLQPKHFKLLEKAAQTLPILYSANMSIGANLLSYLAKEAIKILDDYDVEILDIHHRNKKDSPSGTAIMLAETIANGKDLDIIFNRGNRPRKKEEIGISSLRGGNVHSIHEISFLDDNEIITLKHEALNNNSFANGAIKAAIWLQDKPSALYSMQDIYKIY</sequence>
<organism>
    <name type="scientific">Rickettsia canadensis (strain McKiel)</name>
    <dbReference type="NCBI Taxonomy" id="293613"/>
    <lineage>
        <taxon>Bacteria</taxon>
        <taxon>Pseudomonadati</taxon>
        <taxon>Pseudomonadota</taxon>
        <taxon>Alphaproteobacteria</taxon>
        <taxon>Rickettsiales</taxon>
        <taxon>Rickettsiaceae</taxon>
        <taxon>Rickettsieae</taxon>
        <taxon>Rickettsia</taxon>
        <taxon>belli group</taxon>
    </lineage>
</organism>
<gene>
    <name evidence="1" type="primary">dapB</name>
    <name type="ordered locus">A1E_00755</name>
</gene>
<comment type="function">
    <text evidence="1">Catalyzes the conversion of 4-hydroxy-tetrahydrodipicolinate (HTPA) to tetrahydrodipicolinate.</text>
</comment>
<comment type="catalytic activity">
    <reaction evidence="1">
        <text>(S)-2,3,4,5-tetrahydrodipicolinate + NAD(+) + H2O = (2S,4S)-4-hydroxy-2,3,4,5-tetrahydrodipicolinate + NADH + H(+)</text>
        <dbReference type="Rhea" id="RHEA:35323"/>
        <dbReference type="ChEBI" id="CHEBI:15377"/>
        <dbReference type="ChEBI" id="CHEBI:15378"/>
        <dbReference type="ChEBI" id="CHEBI:16845"/>
        <dbReference type="ChEBI" id="CHEBI:57540"/>
        <dbReference type="ChEBI" id="CHEBI:57945"/>
        <dbReference type="ChEBI" id="CHEBI:67139"/>
        <dbReference type="EC" id="1.17.1.8"/>
    </reaction>
</comment>
<comment type="catalytic activity">
    <reaction evidence="1">
        <text>(S)-2,3,4,5-tetrahydrodipicolinate + NADP(+) + H2O = (2S,4S)-4-hydroxy-2,3,4,5-tetrahydrodipicolinate + NADPH + H(+)</text>
        <dbReference type="Rhea" id="RHEA:35331"/>
        <dbReference type="ChEBI" id="CHEBI:15377"/>
        <dbReference type="ChEBI" id="CHEBI:15378"/>
        <dbReference type="ChEBI" id="CHEBI:16845"/>
        <dbReference type="ChEBI" id="CHEBI:57783"/>
        <dbReference type="ChEBI" id="CHEBI:58349"/>
        <dbReference type="ChEBI" id="CHEBI:67139"/>
        <dbReference type="EC" id="1.17.1.8"/>
    </reaction>
</comment>
<comment type="pathway">
    <text evidence="1">Amino-acid biosynthesis; L-lysine biosynthesis via DAP pathway; (S)-tetrahydrodipicolinate from L-aspartate: step 4/4.</text>
</comment>
<comment type="subcellular location">
    <subcellularLocation>
        <location evidence="1">Cytoplasm</location>
    </subcellularLocation>
</comment>
<comment type="similarity">
    <text evidence="1">Belongs to the DapB family.</text>
</comment>
<comment type="caution">
    <text evidence="2">Was originally thought to be a dihydrodipicolinate reductase (DHDPR), catalyzing the conversion of dihydrodipicolinate to tetrahydrodipicolinate. However, it was shown in E.coli that the substrate of the enzymatic reaction is not dihydrodipicolinate (DHDP) but in fact (2S,4S)-4-hydroxy-2,3,4,5-tetrahydrodipicolinic acid (HTPA), the product released by the DapA-catalyzed reaction.</text>
</comment>
<keyword id="KW-0028">Amino-acid biosynthesis</keyword>
<keyword id="KW-0963">Cytoplasm</keyword>
<keyword id="KW-0220">Diaminopimelate biosynthesis</keyword>
<keyword id="KW-0457">Lysine biosynthesis</keyword>
<keyword id="KW-0520">NAD</keyword>
<keyword id="KW-0521">NADP</keyword>
<keyword id="KW-0560">Oxidoreductase</keyword>
<accession>A8EXL6</accession>
<protein>
    <recommendedName>
        <fullName evidence="1">4-hydroxy-tetrahydrodipicolinate reductase</fullName>
        <shortName evidence="1">HTPA reductase</shortName>
        <ecNumber evidence="1">1.17.1.8</ecNumber>
    </recommendedName>
</protein>